<dbReference type="EC" id="2.1.3.2" evidence="1"/>
<dbReference type="EMBL" id="AP009247">
    <property type="protein sequence ID" value="BAF61187.1"/>
    <property type="molecule type" value="Genomic_DNA"/>
</dbReference>
<dbReference type="RefSeq" id="WP_011929457.1">
    <property type="nucleotide sequence ID" value="NC_009465.1"/>
</dbReference>
<dbReference type="SMR" id="A5CXW7"/>
<dbReference type="STRING" id="412965.COSY_0049"/>
<dbReference type="KEGG" id="vok:COSY_0049"/>
<dbReference type="eggNOG" id="COG0540">
    <property type="taxonomic scope" value="Bacteria"/>
</dbReference>
<dbReference type="HOGENOM" id="CLU_043846_2_0_6"/>
<dbReference type="OrthoDB" id="9774690at2"/>
<dbReference type="UniPathway" id="UPA00070">
    <property type="reaction ID" value="UER00116"/>
</dbReference>
<dbReference type="Proteomes" id="UP000000247">
    <property type="component" value="Chromosome"/>
</dbReference>
<dbReference type="GO" id="GO:0005829">
    <property type="term" value="C:cytosol"/>
    <property type="evidence" value="ECO:0007669"/>
    <property type="project" value="TreeGrafter"/>
</dbReference>
<dbReference type="GO" id="GO:0016597">
    <property type="term" value="F:amino acid binding"/>
    <property type="evidence" value="ECO:0007669"/>
    <property type="project" value="InterPro"/>
</dbReference>
<dbReference type="GO" id="GO:0004070">
    <property type="term" value="F:aspartate carbamoyltransferase activity"/>
    <property type="evidence" value="ECO:0007669"/>
    <property type="project" value="UniProtKB-UniRule"/>
</dbReference>
<dbReference type="GO" id="GO:0006207">
    <property type="term" value="P:'de novo' pyrimidine nucleobase biosynthetic process"/>
    <property type="evidence" value="ECO:0007669"/>
    <property type="project" value="InterPro"/>
</dbReference>
<dbReference type="GO" id="GO:0044205">
    <property type="term" value="P:'de novo' UMP biosynthetic process"/>
    <property type="evidence" value="ECO:0007669"/>
    <property type="project" value="UniProtKB-UniRule"/>
</dbReference>
<dbReference type="GO" id="GO:0006520">
    <property type="term" value="P:amino acid metabolic process"/>
    <property type="evidence" value="ECO:0007669"/>
    <property type="project" value="InterPro"/>
</dbReference>
<dbReference type="Gene3D" id="3.40.50.1370">
    <property type="entry name" value="Aspartate/ornithine carbamoyltransferase"/>
    <property type="match status" value="2"/>
</dbReference>
<dbReference type="HAMAP" id="MF_00001">
    <property type="entry name" value="Asp_carb_tr"/>
    <property type="match status" value="1"/>
</dbReference>
<dbReference type="InterPro" id="IPR006132">
    <property type="entry name" value="Asp/Orn_carbamoyltranf_P-bd"/>
</dbReference>
<dbReference type="InterPro" id="IPR006130">
    <property type="entry name" value="Asp/Orn_carbamoylTrfase"/>
</dbReference>
<dbReference type="InterPro" id="IPR036901">
    <property type="entry name" value="Asp/Orn_carbamoylTrfase_sf"/>
</dbReference>
<dbReference type="InterPro" id="IPR002082">
    <property type="entry name" value="Asp_carbamoyltransf"/>
</dbReference>
<dbReference type="InterPro" id="IPR006131">
    <property type="entry name" value="Asp_carbamoyltransf_Asp/Orn-bd"/>
</dbReference>
<dbReference type="NCBIfam" id="TIGR00670">
    <property type="entry name" value="asp_carb_tr"/>
    <property type="match status" value="1"/>
</dbReference>
<dbReference type="NCBIfam" id="NF002032">
    <property type="entry name" value="PRK00856.1"/>
    <property type="match status" value="1"/>
</dbReference>
<dbReference type="PANTHER" id="PTHR45753:SF6">
    <property type="entry name" value="ASPARTATE CARBAMOYLTRANSFERASE"/>
    <property type="match status" value="1"/>
</dbReference>
<dbReference type="PANTHER" id="PTHR45753">
    <property type="entry name" value="ORNITHINE CARBAMOYLTRANSFERASE, MITOCHONDRIAL"/>
    <property type="match status" value="1"/>
</dbReference>
<dbReference type="Pfam" id="PF00185">
    <property type="entry name" value="OTCace"/>
    <property type="match status" value="1"/>
</dbReference>
<dbReference type="Pfam" id="PF02729">
    <property type="entry name" value="OTCace_N"/>
    <property type="match status" value="1"/>
</dbReference>
<dbReference type="PRINTS" id="PR00100">
    <property type="entry name" value="AOTCASE"/>
</dbReference>
<dbReference type="PRINTS" id="PR00101">
    <property type="entry name" value="ATCASE"/>
</dbReference>
<dbReference type="SUPFAM" id="SSF53671">
    <property type="entry name" value="Aspartate/ornithine carbamoyltransferase"/>
    <property type="match status" value="1"/>
</dbReference>
<dbReference type="PROSITE" id="PS00097">
    <property type="entry name" value="CARBAMOYLTRANSFERASE"/>
    <property type="match status" value="1"/>
</dbReference>
<comment type="function">
    <text evidence="1">Catalyzes the condensation of carbamoyl phosphate and aspartate to form carbamoyl aspartate and inorganic phosphate, the committed step in the de novo pyrimidine nucleotide biosynthesis pathway.</text>
</comment>
<comment type="catalytic activity">
    <reaction evidence="1">
        <text>carbamoyl phosphate + L-aspartate = N-carbamoyl-L-aspartate + phosphate + H(+)</text>
        <dbReference type="Rhea" id="RHEA:20013"/>
        <dbReference type="ChEBI" id="CHEBI:15378"/>
        <dbReference type="ChEBI" id="CHEBI:29991"/>
        <dbReference type="ChEBI" id="CHEBI:32814"/>
        <dbReference type="ChEBI" id="CHEBI:43474"/>
        <dbReference type="ChEBI" id="CHEBI:58228"/>
        <dbReference type="EC" id="2.1.3.2"/>
    </reaction>
</comment>
<comment type="pathway">
    <text evidence="1">Pyrimidine metabolism; UMP biosynthesis via de novo pathway; (S)-dihydroorotate from bicarbonate: step 2/3.</text>
</comment>
<comment type="subunit">
    <text evidence="1">Heterododecamer (2C3:3R2) of six catalytic PyrB chains organized as two trimers (C3), and six regulatory PyrI chains organized as three dimers (R2).</text>
</comment>
<comment type="similarity">
    <text evidence="1">Belongs to the aspartate/ornithine carbamoyltransferase superfamily. ATCase family.</text>
</comment>
<proteinExistence type="inferred from homology"/>
<gene>
    <name evidence="1" type="primary">pyrB</name>
    <name type="ordered locus">COSY_0049</name>
</gene>
<organism>
    <name type="scientific">Vesicomyosocius okutanii subsp. Calyptogena okutanii (strain HA)</name>
    <dbReference type="NCBI Taxonomy" id="412965"/>
    <lineage>
        <taxon>Bacteria</taxon>
        <taxon>Pseudomonadati</taxon>
        <taxon>Pseudomonadota</taxon>
        <taxon>Gammaproteobacteria</taxon>
        <taxon>Candidatus Pseudothioglobaceae</taxon>
        <taxon>Candidatus Vesicomyosocius</taxon>
    </lineage>
</organism>
<reference key="1">
    <citation type="journal article" date="2007" name="Curr. Biol.">
        <title>Reduced genome of the thioautotrophic intracellular symbiont in a deep-sea clam, Calyptogena okutanii.</title>
        <authorList>
            <person name="Kuwahara H."/>
            <person name="Yoshida T."/>
            <person name="Takaki Y."/>
            <person name="Shimamura S."/>
            <person name="Nishi S."/>
            <person name="Harada M."/>
            <person name="Matsuyama K."/>
            <person name="Takishita K."/>
            <person name="Kawato M."/>
            <person name="Uematsu K."/>
            <person name="Fujiwara Y."/>
            <person name="Sato T."/>
            <person name="Kato C."/>
            <person name="Kitagawa M."/>
            <person name="Kato I."/>
            <person name="Maruyama T."/>
        </authorList>
    </citation>
    <scope>NUCLEOTIDE SEQUENCE [LARGE SCALE GENOMIC DNA]</scope>
    <source>
        <strain>HA</strain>
    </source>
</reference>
<evidence type="ECO:0000255" key="1">
    <source>
        <dbReference type="HAMAP-Rule" id="MF_00001"/>
    </source>
</evidence>
<accession>A5CXW7</accession>
<sequence>MKKNLISNHIQLNDSGKLIHLLGLEGLSKQHLTHILDKADSLIDTSGNLKKSKALDDMSIANLFFEPSTRTRNTFEIAAMRSSANVINVDLANSALKKNEDLLDTMRTLKAMQIDMFVIRHKQNGLPHHVAKYLEGVSILNAGDGINAHPTQALLDMLSIRQHKKTFENLSVAIVGDIIHSRVAHSGIQALKTLGTTDIRLIAPKILQYNSEPCSEVSCFDDIEPGLKDCDVVIVLRLQKERMIEANIPNEQEYFNNFGLTPKRLALTKSDAIVMHPGPINRGVEIDSIVADGNQSIILQQVTDGIAIRMAVMQILANKS</sequence>
<keyword id="KW-0665">Pyrimidine biosynthesis</keyword>
<keyword id="KW-1185">Reference proteome</keyword>
<keyword id="KW-0808">Transferase</keyword>
<name>PYRB_VESOH</name>
<protein>
    <recommendedName>
        <fullName evidence="1">Aspartate carbamoyltransferase catalytic subunit</fullName>
        <ecNumber evidence="1">2.1.3.2</ecNumber>
    </recommendedName>
    <alternativeName>
        <fullName evidence="1">Aspartate transcarbamylase</fullName>
        <shortName evidence="1">ATCase</shortName>
    </alternativeName>
</protein>
<feature type="chain" id="PRO_0000321180" description="Aspartate carbamoyltransferase catalytic subunit">
    <location>
        <begin position="1"/>
        <end position="320"/>
    </location>
</feature>
<feature type="binding site" evidence="1">
    <location>
        <position position="70"/>
    </location>
    <ligand>
        <name>carbamoyl phosphate</name>
        <dbReference type="ChEBI" id="CHEBI:58228"/>
    </ligand>
</feature>
<feature type="binding site" evidence="1">
    <location>
        <position position="71"/>
    </location>
    <ligand>
        <name>carbamoyl phosphate</name>
        <dbReference type="ChEBI" id="CHEBI:58228"/>
    </ligand>
</feature>
<feature type="binding site" evidence="1">
    <location>
        <position position="98"/>
    </location>
    <ligand>
        <name>L-aspartate</name>
        <dbReference type="ChEBI" id="CHEBI:29991"/>
    </ligand>
</feature>
<feature type="binding site" evidence="1">
    <location>
        <position position="120"/>
    </location>
    <ligand>
        <name>carbamoyl phosphate</name>
        <dbReference type="ChEBI" id="CHEBI:58228"/>
    </ligand>
</feature>
<feature type="binding site" evidence="1">
    <location>
        <position position="149"/>
    </location>
    <ligand>
        <name>carbamoyl phosphate</name>
        <dbReference type="ChEBI" id="CHEBI:58228"/>
    </ligand>
</feature>
<feature type="binding site" evidence="1">
    <location>
        <position position="152"/>
    </location>
    <ligand>
        <name>carbamoyl phosphate</name>
        <dbReference type="ChEBI" id="CHEBI:58228"/>
    </ligand>
</feature>
<feature type="binding site" evidence="1">
    <location>
        <position position="182"/>
    </location>
    <ligand>
        <name>L-aspartate</name>
        <dbReference type="ChEBI" id="CHEBI:29991"/>
    </ligand>
</feature>
<feature type="binding site" evidence="1">
    <location>
        <position position="237"/>
    </location>
    <ligand>
        <name>L-aspartate</name>
        <dbReference type="ChEBI" id="CHEBI:29991"/>
    </ligand>
</feature>
<feature type="binding site" evidence="1">
    <location>
        <position position="278"/>
    </location>
    <ligand>
        <name>carbamoyl phosphate</name>
        <dbReference type="ChEBI" id="CHEBI:58228"/>
    </ligand>
</feature>
<feature type="binding site" evidence="1">
    <location>
        <position position="279"/>
    </location>
    <ligand>
        <name>carbamoyl phosphate</name>
        <dbReference type="ChEBI" id="CHEBI:58228"/>
    </ligand>
</feature>